<proteinExistence type="evidence at protein level"/>
<organism>
    <name type="scientific">Uperoleia rugosa</name>
    <name type="common">Wrinkled toadlet</name>
    <name type="synonym">Pseudophryne rugosa</name>
    <dbReference type="NCBI Taxonomy" id="8368"/>
    <lineage>
        <taxon>Eukaryota</taxon>
        <taxon>Metazoa</taxon>
        <taxon>Chordata</taxon>
        <taxon>Craniata</taxon>
        <taxon>Vertebrata</taxon>
        <taxon>Euteleostomi</taxon>
        <taxon>Amphibia</taxon>
        <taxon>Batrachia</taxon>
        <taxon>Anura</taxon>
        <taxon>Neobatrachia</taxon>
        <taxon>Myobatrachoidea</taxon>
        <taxon>Myobatrachidae</taxon>
        <taxon>Myobatrachinae</taxon>
        <taxon>Uperoleia</taxon>
    </lineage>
</organism>
<protein>
    <recommendedName>
        <fullName>Uperolein</fullName>
    </recommendedName>
</protein>
<accession>P08612</accession>
<name>TKN1_UPERU</name>
<sequence>QPDPNAFYGLM</sequence>
<evidence type="ECO:0000269" key="1">
    <source>
    </source>
</evidence>
<evidence type="ECO:0000305" key="2"/>
<evidence type="ECO:0007829" key="3">
    <source>
        <dbReference type="PDB" id="2GFR"/>
    </source>
</evidence>
<dbReference type="PDB" id="2GFR">
    <property type="method" value="NMR"/>
    <property type="chains" value="A=1-11"/>
</dbReference>
<dbReference type="PDBsum" id="2GFR"/>
<dbReference type="SMR" id="P08612"/>
<dbReference type="EvolutionaryTrace" id="P08612"/>
<dbReference type="GO" id="GO:0005576">
    <property type="term" value="C:extracellular region"/>
    <property type="evidence" value="ECO:0007669"/>
    <property type="project" value="UniProtKB-SubCell"/>
</dbReference>
<dbReference type="GO" id="GO:0006952">
    <property type="term" value="P:defense response"/>
    <property type="evidence" value="ECO:0007669"/>
    <property type="project" value="UniProtKB-KW"/>
</dbReference>
<dbReference type="GO" id="GO:0007218">
    <property type="term" value="P:neuropeptide signaling pathway"/>
    <property type="evidence" value="ECO:0007669"/>
    <property type="project" value="UniProtKB-KW"/>
</dbReference>
<dbReference type="GO" id="GO:0007217">
    <property type="term" value="P:tachykinin receptor signaling pathway"/>
    <property type="evidence" value="ECO:0007669"/>
    <property type="project" value="InterPro"/>
</dbReference>
<dbReference type="InterPro" id="IPR013055">
    <property type="entry name" value="Tachy_Neuro_lke_CS"/>
</dbReference>
<dbReference type="InterPro" id="IPR008215">
    <property type="entry name" value="Tachykinin_dom"/>
</dbReference>
<dbReference type="Pfam" id="PF02202">
    <property type="entry name" value="Tachykinin"/>
    <property type="match status" value="1"/>
</dbReference>
<dbReference type="PROSITE" id="PS00267">
    <property type="entry name" value="TACHYKININ"/>
    <property type="match status" value="1"/>
</dbReference>
<feature type="peptide" id="PRO_0000044414" description="Uperolein">
    <location>
        <begin position="1"/>
        <end position="11"/>
    </location>
</feature>
<feature type="modified residue" description="Pyrrolidone carboxylic acid" evidence="1">
    <location>
        <position position="1"/>
    </location>
</feature>
<feature type="modified residue" description="Methionine amide" evidence="1">
    <location>
        <position position="11"/>
    </location>
</feature>
<feature type="helix" evidence="3">
    <location>
        <begin position="4"/>
        <end position="7"/>
    </location>
</feature>
<feature type="turn" evidence="3">
    <location>
        <begin position="8"/>
        <end position="10"/>
    </location>
</feature>
<comment type="function">
    <text>Tachykinins are active peptides which excite neurons, evoke behavioral responses, are potent vasodilators and secretagogues, and contract (directly or indirectly) many smooth muscles.</text>
</comment>
<comment type="subcellular location">
    <subcellularLocation>
        <location>Secreted</location>
    </subcellularLocation>
</comment>
<comment type="tissue specificity">
    <text>Expressed by the skin glands.</text>
</comment>
<comment type="similarity">
    <text evidence="2">Belongs to the tachykinin family.</text>
</comment>
<keyword id="KW-0002">3D-structure</keyword>
<keyword id="KW-0027">Amidation</keyword>
<keyword id="KW-0878">Amphibian defense peptide</keyword>
<keyword id="KW-0903">Direct protein sequencing</keyword>
<keyword id="KW-0527">Neuropeptide</keyword>
<keyword id="KW-0873">Pyrrolidone carboxylic acid</keyword>
<keyword id="KW-0964">Secreted</keyword>
<reference key="1">
    <citation type="journal article" date="1975" name="Experientia">
        <title>Structure of uperolein, a physalaemin-like endecapeptide occurring in the skin of Uperoleia rugosa and Uperoleia marmorata.</title>
        <authorList>
            <person name="Anastasi A."/>
            <person name="Erspamer V."/>
            <person name="Endean R."/>
        </authorList>
    </citation>
    <scope>PROTEIN SEQUENCE</scope>
    <scope>PYROGLUTAMATE FORMATION AT GLN-1</scope>
    <scope>AMIDATION AT MET-11</scope>
    <source>
        <tissue>Skin secretion</tissue>
    </source>
</reference>